<dbReference type="EC" id="2.1.1.199" evidence="1"/>
<dbReference type="EMBL" id="FM954972">
    <property type="protein sequence ID" value="CAV17449.1"/>
    <property type="molecule type" value="Genomic_DNA"/>
</dbReference>
<dbReference type="SMR" id="B7VIZ5"/>
<dbReference type="STRING" id="575788.VS_0442"/>
<dbReference type="KEGG" id="vsp:VS_0442"/>
<dbReference type="eggNOG" id="COG0275">
    <property type="taxonomic scope" value="Bacteria"/>
</dbReference>
<dbReference type="HOGENOM" id="CLU_038422_2_0_6"/>
<dbReference type="Proteomes" id="UP000009100">
    <property type="component" value="Chromosome 1"/>
</dbReference>
<dbReference type="GO" id="GO:0005737">
    <property type="term" value="C:cytoplasm"/>
    <property type="evidence" value="ECO:0007669"/>
    <property type="project" value="UniProtKB-SubCell"/>
</dbReference>
<dbReference type="GO" id="GO:0071424">
    <property type="term" value="F:rRNA (cytosine-N4-)-methyltransferase activity"/>
    <property type="evidence" value="ECO:0007669"/>
    <property type="project" value="UniProtKB-UniRule"/>
</dbReference>
<dbReference type="GO" id="GO:0070475">
    <property type="term" value="P:rRNA base methylation"/>
    <property type="evidence" value="ECO:0007669"/>
    <property type="project" value="UniProtKB-UniRule"/>
</dbReference>
<dbReference type="FunFam" id="1.10.150.170:FF:000001">
    <property type="entry name" value="Ribosomal RNA small subunit methyltransferase H"/>
    <property type="match status" value="1"/>
</dbReference>
<dbReference type="Gene3D" id="1.10.150.170">
    <property type="entry name" value="Putative methyltransferase TM0872, insert domain"/>
    <property type="match status" value="1"/>
</dbReference>
<dbReference type="Gene3D" id="3.40.50.150">
    <property type="entry name" value="Vaccinia Virus protein VP39"/>
    <property type="match status" value="1"/>
</dbReference>
<dbReference type="HAMAP" id="MF_01007">
    <property type="entry name" value="16SrRNA_methyltr_H"/>
    <property type="match status" value="1"/>
</dbReference>
<dbReference type="InterPro" id="IPR002903">
    <property type="entry name" value="RsmH"/>
</dbReference>
<dbReference type="InterPro" id="IPR023397">
    <property type="entry name" value="SAM-dep_MeTrfase_MraW_recog"/>
</dbReference>
<dbReference type="InterPro" id="IPR029063">
    <property type="entry name" value="SAM-dependent_MTases_sf"/>
</dbReference>
<dbReference type="NCBIfam" id="TIGR00006">
    <property type="entry name" value="16S rRNA (cytosine(1402)-N(4))-methyltransferase RsmH"/>
    <property type="match status" value="1"/>
</dbReference>
<dbReference type="PANTHER" id="PTHR11265:SF0">
    <property type="entry name" value="12S RRNA N4-METHYLCYTIDINE METHYLTRANSFERASE"/>
    <property type="match status" value="1"/>
</dbReference>
<dbReference type="PANTHER" id="PTHR11265">
    <property type="entry name" value="S-ADENOSYL-METHYLTRANSFERASE MRAW"/>
    <property type="match status" value="1"/>
</dbReference>
<dbReference type="Pfam" id="PF01795">
    <property type="entry name" value="Methyltransf_5"/>
    <property type="match status" value="1"/>
</dbReference>
<dbReference type="PIRSF" id="PIRSF004486">
    <property type="entry name" value="MraW"/>
    <property type="match status" value="1"/>
</dbReference>
<dbReference type="SUPFAM" id="SSF81799">
    <property type="entry name" value="Putative methyltransferase TM0872, insert domain"/>
    <property type="match status" value="1"/>
</dbReference>
<dbReference type="SUPFAM" id="SSF53335">
    <property type="entry name" value="S-adenosyl-L-methionine-dependent methyltransferases"/>
    <property type="match status" value="1"/>
</dbReference>
<feature type="chain" id="PRO_0000387211" description="Ribosomal RNA small subunit methyltransferase H">
    <location>
        <begin position="1"/>
        <end position="316"/>
    </location>
</feature>
<feature type="region of interest" description="Disordered" evidence="2">
    <location>
        <begin position="291"/>
        <end position="316"/>
    </location>
</feature>
<feature type="compositionally biased region" description="Basic and acidic residues" evidence="2">
    <location>
        <begin position="294"/>
        <end position="304"/>
    </location>
</feature>
<feature type="binding site" evidence="1">
    <location>
        <begin position="35"/>
        <end position="37"/>
    </location>
    <ligand>
        <name>S-adenosyl-L-methionine</name>
        <dbReference type="ChEBI" id="CHEBI:59789"/>
    </ligand>
</feature>
<feature type="binding site" evidence="1">
    <location>
        <position position="55"/>
    </location>
    <ligand>
        <name>S-adenosyl-L-methionine</name>
        <dbReference type="ChEBI" id="CHEBI:59789"/>
    </ligand>
</feature>
<feature type="binding site" evidence="1">
    <location>
        <position position="79"/>
    </location>
    <ligand>
        <name>S-adenosyl-L-methionine</name>
        <dbReference type="ChEBI" id="CHEBI:59789"/>
    </ligand>
</feature>
<feature type="binding site" evidence="1">
    <location>
        <position position="101"/>
    </location>
    <ligand>
        <name>S-adenosyl-L-methionine</name>
        <dbReference type="ChEBI" id="CHEBI:59789"/>
    </ligand>
</feature>
<feature type="binding site" evidence="1">
    <location>
        <position position="108"/>
    </location>
    <ligand>
        <name>S-adenosyl-L-methionine</name>
        <dbReference type="ChEBI" id="CHEBI:59789"/>
    </ligand>
</feature>
<proteinExistence type="inferred from homology"/>
<protein>
    <recommendedName>
        <fullName evidence="1">Ribosomal RNA small subunit methyltransferase H</fullName>
        <ecNumber evidence="1">2.1.1.199</ecNumber>
    </recommendedName>
    <alternativeName>
        <fullName evidence="1">16S rRNA m(4)C1402 methyltransferase</fullName>
    </alternativeName>
    <alternativeName>
        <fullName evidence="1">rRNA (cytosine-N(4)-)-methyltransferase RsmH</fullName>
    </alternativeName>
</protein>
<organism>
    <name type="scientific">Vibrio atlanticus (strain LGP32)</name>
    <name type="common">Vibrio splendidus (strain Mel32)</name>
    <dbReference type="NCBI Taxonomy" id="575788"/>
    <lineage>
        <taxon>Bacteria</taxon>
        <taxon>Pseudomonadati</taxon>
        <taxon>Pseudomonadota</taxon>
        <taxon>Gammaproteobacteria</taxon>
        <taxon>Vibrionales</taxon>
        <taxon>Vibrionaceae</taxon>
        <taxon>Vibrio</taxon>
    </lineage>
</organism>
<sequence length="316" mass="35050">MTEAFKHISVLLNESIDGLAIKPDGTYIDGTFGRGGHSRTILSKLGENGRLFSIDRDPQAIAEAQKIDDPRFTIIHGPFSGMAEYAERYDLVGQVDGVLLDLGVSSPQLDDAERGFSFMKDGPLDMRMDPTTGIPVSQWLVEADLDDITWVIREFGEDKHARRIAKGIIAYQENEENEPLTRTGQLAKLISDVAPKSFKEKKHPATRAFQAFRIYINSELEEIDTALKGAASILAPQGRISVISFHSLEDRMVKRFIRKESQGPQVPHGLPLTEEQIKALGSADLKPIGKAIKPSKDEVDENTRSRSSVLRIAEKL</sequence>
<name>RSMH_VIBA3</name>
<evidence type="ECO:0000255" key="1">
    <source>
        <dbReference type="HAMAP-Rule" id="MF_01007"/>
    </source>
</evidence>
<evidence type="ECO:0000256" key="2">
    <source>
        <dbReference type="SAM" id="MobiDB-lite"/>
    </source>
</evidence>
<reference key="1">
    <citation type="submission" date="2009-02" db="EMBL/GenBank/DDBJ databases">
        <title>Vibrio splendidus str. LGP32 complete genome.</title>
        <authorList>
            <person name="Mazel D."/>
            <person name="Le Roux F."/>
        </authorList>
    </citation>
    <scope>NUCLEOTIDE SEQUENCE [LARGE SCALE GENOMIC DNA]</scope>
    <source>
        <strain>LGP32</strain>
    </source>
</reference>
<comment type="function">
    <text evidence="1">Specifically methylates the N4 position of cytidine in position 1402 (C1402) of 16S rRNA.</text>
</comment>
<comment type="catalytic activity">
    <reaction evidence="1">
        <text>cytidine(1402) in 16S rRNA + S-adenosyl-L-methionine = N(4)-methylcytidine(1402) in 16S rRNA + S-adenosyl-L-homocysteine + H(+)</text>
        <dbReference type="Rhea" id="RHEA:42928"/>
        <dbReference type="Rhea" id="RHEA-COMP:10286"/>
        <dbReference type="Rhea" id="RHEA-COMP:10287"/>
        <dbReference type="ChEBI" id="CHEBI:15378"/>
        <dbReference type="ChEBI" id="CHEBI:57856"/>
        <dbReference type="ChEBI" id="CHEBI:59789"/>
        <dbReference type="ChEBI" id="CHEBI:74506"/>
        <dbReference type="ChEBI" id="CHEBI:82748"/>
        <dbReference type="EC" id="2.1.1.199"/>
    </reaction>
</comment>
<comment type="subcellular location">
    <subcellularLocation>
        <location evidence="1">Cytoplasm</location>
    </subcellularLocation>
</comment>
<comment type="similarity">
    <text evidence="1">Belongs to the methyltransferase superfamily. RsmH family.</text>
</comment>
<keyword id="KW-0963">Cytoplasm</keyword>
<keyword id="KW-0489">Methyltransferase</keyword>
<keyword id="KW-0698">rRNA processing</keyword>
<keyword id="KW-0949">S-adenosyl-L-methionine</keyword>
<keyword id="KW-0808">Transferase</keyword>
<accession>B7VIZ5</accession>
<gene>
    <name evidence="1" type="primary">rsmH</name>
    <name type="synonym">mraW</name>
    <name type="ordered locus">VS_0442</name>
</gene>